<feature type="chain" id="PRO_0000434413" description="Protein BRI1-5 ENHANCED 1">
    <location>
        <begin position="1"/>
        <end position="364"/>
    </location>
</feature>
<feature type="region of interest" description="Disordered" evidence="3">
    <location>
        <begin position="1"/>
        <end position="22"/>
    </location>
</feature>
<feature type="compositionally biased region" description="Acidic residues" evidence="3">
    <location>
        <begin position="1"/>
        <end position="11"/>
    </location>
</feature>
<feature type="active site" description="Proton donor" evidence="1">
    <location>
        <position position="206"/>
    </location>
</feature>
<feature type="binding site" evidence="1">
    <location>
        <begin position="44"/>
        <end position="49"/>
    </location>
    <ligand>
        <name>NADP(+)</name>
        <dbReference type="ChEBI" id="CHEBI:58349"/>
    </ligand>
</feature>
<feature type="binding site" evidence="1">
    <location>
        <position position="69"/>
    </location>
    <ligand>
        <name>NADP(+)</name>
        <dbReference type="ChEBI" id="CHEBI:58349"/>
    </ligand>
</feature>
<feature type="binding site" evidence="1">
    <location>
        <begin position="98"/>
        <end position="99"/>
    </location>
    <ligand>
        <name>NADP(+)</name>
        <dbReference type="ChEBI" id="CHEBI:58349"/>
    </ligand>
</feature>
<feature type="binding site" evidence="1">
    <location>
        <position position="202"/>
    </location>
    <ligand>
        <name>NADP(+)</name>
        <dbReference type="ChEBI" id="CHEBI:58349"/>
    </ligand>
</feature>
<feature type="binding site" evidence="1">
    <location>
        <position position="206"/>
    </location>
    <ligand>
        <name>NADP(+)</name>
        <dbReference type="ChEBI" id="CHEBI:58349"/>
    </ligand>
</feature>
<feature type="binding site" evidence="1">
    <location>
        <position position="232"/>
    </location>
    <ligand>
        <name>NADP(+)</name>
        <dbReference type="ChEBI" id="CHEBI:58349"/>
    </ligand>
</feature>
<feature type="binding site" evidence="1">
    <location>
        <position position="244"/>
    </location>
    <ligand>
        <name>NADP(+)</name>
        <dbReference type="ChEBI" id="CHEBI:58349"/>
    </ligand>
</feature>
<name>BEN1_ARATH</name>
<accession>O22133</accession>
<protein>
    <recommendedName>
        <fullName evidence="6">Protein BRI1-5 ENHANCED 1</fullName>
        <ecNumber evidence="8">1.1.1.-</ecNumber>
    </recommendedName>
</protein>
<dbReference type="EC" id="1.1.1.-" evidence="8"/>
<dbReference type="EMBL" id="AC002387">
    <property type="protein sequence ID" value="AAB82624.1"/>
    <property type="molecule type" value="Genomic_DNA"/>
</dbReference>
<dbReference type="EMBL" id="CP002685">
    <property type="protein sequence ID" value="AEC10546.1"/>
    <property type="molecule type" value="Genomic_DNA"/>
</dbReference>
<dbReference type="PIR" id="A84890">
    <property type="entry name" value="A84890"/>
</dbReference>
<dbReference type="RefSeq" id="NP_182064.1">
    <property type="nucleotide sequence ID" value="NM_130102.5"/>
</dbReference>
<dbReference type="SMR" id="O22133"/>
<dbReference type="FunCoup" id="O22133">
    <property type="interactions" value="32"/>
</dbReference>
<dbReference type="IntAct" id="O22133">
    <property type="interactions" value="1"/>
</dbReference>
<dbReference type="STRING" id="3702.O22133"/>
<dbReference type="PaxDb" id="3702-AT2G45400.1"/>
<dbReference type="ProteomicsDB" id="240778"/>
<dbReference type="EnsemblPlants" id="AT2G45400.1">
    <property type="protein sequence ID" value="AT2G45400.1"/>
    <property type="gene ID" value="AT2G45400"/>
</dbReference>
<dbReference type="GeneID" id="819146"/>
<dbReference type="Gramene" id="AT2G45400.1">
    <property type="protein sequence ID" value="AT2G45400.1"/>
    <property type="gene ID" value="AT2G45400"/>
</dbReference>
<dbReference type="KEGG" id="ath:AT2G45400"/>
<dbReference type="Araport" id="AT2G45400"/>
<dbReference type="TAIR" id="AT2G45400">
    <property type="gene designation" value="BEN1"/>
</dbReference>
<dbReference type="eggNOG" id="KOG1502">
    <property type="taxonomic scope" value="Eukaryota"/>
</dbReference>
<dbReference type="HOGENOM" id="CLU_007383_9_0_1"/>
<dbReference type="InParanoid" id="O22133"/>
<dbReference type="PhylomeDB" id="O22133"/>
<dbReference type="BioCyc" id="ARA:AT2G45400-MONOMER"/>
<dbReference type="UniPathway" id="UPA00381"/>
<dbReference type="PRO" id="PR:O22133"/>
<dbReference type="Proteomes" id="UP000006548">
    <property type="component" value="Chromosome 2"/>
</dbReference>
<dbReference type="ExpressionAtlas" id="O22133">
    <property type="expression patterns" value="baseline and differential"/>
</dbReference>
<dbReference type="GO" id="GO:0005737">
    <property type="term" value="C:cytoplasm"/>
    <property type="evidence" value="ECO:0000314"/>
    <property type="project" value="TAIR"/>
</dbReference>
<dbReference type="GO" id="GO:0016491">
    <property type="term" value="F:oxidoreductase activity"/>
    <property type="evidence" value="ECO:0007669"/>
    <property type="project" value="UniProtKB-KW"/>
</dbReference>
<dbReference type="GO" id="GO:0016132">
    <property type="term" value="P:brassinosteroid biosynthetic process"/>
    <property type="evidence" value="ECO:0007669"/>
    <property type="project" value="UniProtKB-UniPathway"/>
</dbReference>
<dbReference type="GO" id="GO:0016131">
    <property type="term" value="P:brassinosteroid metabolic process"/>
    <property type="evidence" value="ECO:0000315"/>
    <property type="project" value="TAIR"/>
</dbReference>
<dbReference type="GO" id="GO:0010422">
    <property type="term" value="P:regulation of brassinosteroid biosynthetic process"/>
    <property type="evidence" value="ECO:0000315"/>
    <property type="project" value="TAIR"/>
</dbReference>
<dbReference type="GO" id="GO:0009646">
    <property type="term" value="P:response to absence of light"/>
    <property type="evidence" value="ECO:0000270"/>
    <property type="project" value="UniProtKB"/>
</dbReference>
<dbReference type="CDD" id="cd08958">
    <property type="entry name" value="FR_SDR_e"/>
    <property type="match status" value="1"/>
</dbReference>
<dbReference type="FunFam" id="3.40.50.720:FF:000984">
    <property type="entry name" value="Dihydroflavonol 4-reductase family"/>
    <property type="match status" value="1"/>
</dbReference>
<dbReference type="Gene3D" id="3.40.50.720">
    <property type="entry name" value="NAD(P)-binding Rossmann-like Domain"/>
    <property type="match status" value="1"/>
</dbReference>
<dbReference type="InterPro" id="IPR001509">
    <property type="entry name" value="Epimerase_deHydtase"/>
</dbReference>
<dbReference type="InterPro" id="IPR036291">
    <property type="entry name" value="NAD(P)-bd_dom_sf"/>
</dbReference>
<dbReference type="InterPro" id="IPR050425">
    <property type="entry name" value="NAD(P)_dehydrat-like"/>
</dbReference>
<dbReference type="PANTHER" id="PTHR10366">
    <property type="entry name" value="NAD DEPENDENT EPIMERASE/DEHYDRATASE"/>
    <property type="match status" value="1"/>
</dbReference>
<dbReference type="PANTHER" id="PTHR10366:SF689">
    <property type="entry name" value="PROTEIN BRI1-5 ENHANCED 1"/>
    <property type="match status" value="1"/>
</dbReference>
<dbReference type="Pfam" id="PF01370">
    <property type="entry name" value="Epimerase"/>
    <property type="match status" value="1"/>
</dbReference>
<dbReference type="SUPFAM" id="SSF51735">
    <property type="entry name" value="NAD(P)-binding Rossmann-fold domains"/>
    <property type="match status" value="1"/>
</dbReference>
<sequence length="364" mass="40261">MVREEQEEDDNNNNNNGGGERKLLVADETVPSLLDETGLVCVTGGSGFVASWLIMRLLQRGYSVRATVRTNSEGNKKDISYLTELPFASERLQIFTADLNEPESFKPAIEGCKAVFHVAHPMDPNSNETEETVTKRTVQGLMGILKSCLDAKTVKRFFYTSSAVTVFYSGGNGGGGGEVDESVWSDVEVFRNQKEKRVSSSYVVSKMAAETAALEFGGKNGLEVVTLVIPLVVGPFISSSLPSSVFISLAMLFGNYKEKYLFDTYNMVHIDDVARAMIFLLEKPVAKGRYICSSVEMKIDEVFEFLSTKFPQFQLPSIDLNKYKVEKRMGLSSKKLKSAGFEFKYGAEEIFSGAIRSCQARGFL</sequence>
<keyword id="KW-1069">Brassinosteroid biosynthesis</keyword>
<keyword id="KW-0963">Cytoplasm</keyword>
<keyword id="KW-0217">Developmental protein</keyword>
<keyword id="KW-0444">Lipid biosynthesis</keyword>
<keyword id="KW-0443">Lipid metabolism</keyword>
<keyword id="KW-0521">NADP</keyword>
<keyword id="KW-0560">Oxidoreductase</keyword>
<keyword id="KW-1185">Reference proteome</keyword>
<keyword id="KW-0752">Steroid biosynthesis</keyword>
<evidence type="ECO:0000250" key="1">
    <source>
        <dbReference type="UniProtKB" id="Q12068"/>
    </source>
</evidence>
<evidence type="ECO:0000250" key="2">
    <source>
        <dbReference type="UniProtKB" id="Q40316"/>
    </source>
</evidence>
<evidence type="ECO:0000256" key="3">
    <source>
        <dbReference type="SAM" id="MobiDB-lite"/>
    </source>
</evidence>
<evidence type="ECO:0000269" key="4">
    <source>
    </source>
</evidence>
<evidence type="ECO:0000269" key="5">
    <source>
    </source>
</evidence>
<evidence type="ECO:0000303" key="6">
    <source>
    </source>
</evidence>
<evidence type="ECO:0000305" key="7"/>
<evidence type="ECO:0000305" key="8">
    <source>
    </source>
</evidence>
<evidence type="ECO:0000312" key="9">
    <source>
        <dbReference type="EMBL" id="AAB82624.1"/>
    </source>
</evidence>
<evidence type="ECO:0000312" key="10">
    <source>
        <dbReference type="EMBL" id="AEC10546.1"/>
    </source>
</evidence>
<evidence type="ECO:0000312" key="11">
    <source>
        <dbReference type="Proteomes" id="UP000006548"/>
    </source>
</evidence>
<organism evidence="11">
    <name type="scientific">Arabidopsis thaliana</name>
    <name type="common">Mouse-ear cress</name>
    <dbReference type="NCBI Taxonomy" id="3702"/>
    <lineage>
        <taxon>Eukaryota</taxon>
        <taxon>Viridiplantae</taxon>
        <taxon>Streptophyta</taxon>
        <taxon>Embryophyta</taxon>
        <taxon>Tracheophyta</taxon>
        <taxon>Spermatophyta</taxon>
        <taxon>Magnoliopsida</taxon>
        <taxon>eudicotyledons</taxon>
        <taxon>Gunneridae</taxon>
        <taxon>Pentapetalae</taxon>
        <taxon>rosids</taxon>
        <taxon>malvids</taxon>
        <taxon>Brassicales</taxon>
        <taxon>Brassicaceae</taxon>
        <taxon>Camelineae</taxon>
        <taxon>Arabidopsis</taxon>
    </lineage>
</organism>
<reference key="1">
    <citation type="journal article" date="1999" name="Nature">
        <title>Sequence and analysis of chromosome 2 of the plant Arabidopsis thaliana.</title>
        <authorList>
            <person name="Lin X."/>
            <person name="Kaul S."/>
            <person name="Rounsley S.D."/>
            <person name="Shea T.P."/>
            <person name="Benito M.-I."/>
            <person name="Town C.D."/>
            <person name="Fujii C.Y."/>
            <person name="Mason T.M."/>
            <person name="Bowman C.L."/>
            <person name="Barnstead M.E."/>
            <person name="Feldblyum T.V."/>
            <person name="Buell C.R."/>
            <person name="Ketchum K.A."/>
            <person name="Lee J.J."/>
            <person name="Ronning C.M."/>
            <person name="Koo H.L."/>
            <person name="Moffat K.S."/>
            <person name="Cronin L.A."/>
            <person name="Shen M."/>
            <person name="Pai G."/>
            <person name="Van Aken S."/>
            <person name="Umayam L."/>
            <person name="Tallon L.J."/>
            <person name="Gill J.E."/>
            <person name="Adams M.D."/>
            <person name="Carrera A.J."/>
            <person name="Creasy T.H."/>
            <person name="Goodman H.M."/>
            <person name="Somerville C.R."/>
            <person name="Copenhaver G.P."/>
            <person name="Preuss D."/>
            <person name="Nierman W.C."/>
            <person name="White O."/>
            <person name="Eisen J.A."/>
            <person name="Salzberg S.L."/>
            <person name="Fraser C.M."/>
            <person name="Venter J.C."/>
        </authorList>
    </citation>
    <scope>NUCLEOTIDE SEQUENCE [LARGE SCALE GENOMIC DNA]</scope>
    <source>
        <strain>cv. Columbia</strain>
    </source>
</reference>
<reference key="2">
    <citation type="journal article" date="2017" name="Plant J.">
        <title>Araport11: a complete reannotation of the Arabidopsis thaliana reference genome.</title>
        <authorList>
            <person name="Cheng C.Y."/>
            <person name="Krishnakumar V."/>
            <person name="Chan A.P."/>
            <person name="Thibaud-Nissen F."/>
            <person name="Schobel S."/>
            <person name="Town C.D."/>
        </authorList>
    </citation>
    <scope>GENOME REANNOTATION</scope>
    <source>
        <strain>cv. Columbia</strain>
    </source>
</reference>
<reference key="3">
    <citation type="journal article" date="2007" name="Plant J.">
        <title>BEN1, a gene encoding a dihydroflavonol 4-reductase (DFR)-like protein, regulates the levels of brassinosteroids in Arabidopsis thaliana.</title>
        <authorList>
            <person name="Yuan T."/>
            <person name="Fujioka S."/>
            <person name="Takatsuto S."/>
            <person name="Matsumoto S."/>
            <person name="Gou X."/>
            <person name="He K."/>
            <person name="Russell S.D."/>
            <person name="Li J."/>
        </authorList>
    </citation>
    <scope>FUNCTION</scope>
    <scope>DISRUPTION PHENOTYPE</scope>
    <scope>SUBCELLULAR LOCATION</scope>
    <scope>TISSUE SPECIFICITY</scope>
    <scope>DEVELOPMENTAL STAGE</scope>
    <scope>MISCELLANEOUS</scope>
    <scope>INDUCTION BY DARKNESS</scope>
    <source>
        <strain>cv. Columbia</strain>
        <strain>cv. Wassilewskija-2</strain>
    </source>
</reference>
<reference key="4">
    <citation type="journal article" date="2013" name="G3 (Bethesda)">
        <title>The ben1-1 brassinosteroid-catabolism mutation is unstable due to epigenetic modifications of the intronic T-DNA insertion.</title>
        <authorList>
            <person name="Sandhu K.S."/>
            <person name="Koirala P.S."/>
            <person name="Neff M.M."/>
        </authorList>
    </citation>
    <scope>FUNCTION</scope>
    <scope>DISRUPTION PHENOTYPE</scope>
    <source>
        <strain>cv. Columbia</strain>
    </source>
</reference>
<proteinExistence type="evidence at transcript level"/>
<comment type="function">
    <text evidence="4 5">Element of the brassinosteroid metabolic pathway that regulates typhasterol (TY), castasterone (CS) and brassinolide (BL) levels (PubMed:17521414). Involved in the control of organ elongation (PubMed:17521414, PubMed:23893742).</text>
</comment>
<comment type="pathway">
    <text evidence="4">Plant hormone biosynthesis; brassinosteroid biosynthesis.</text>
</comment>
<comment type="subunit">
    <text evidence="2">Monomer.</text>
</comment>
<comment type="subcellular location">
    <subcellularLocation>
        <location evidence="4">Cytoplasm</location>
    </subcellularLocation>
</comment>
<comment type="tissue specificity">
    <text evidence="4">Mainly present in cell elongating-containing tissues. Strongly expressed in roots and flowers, also observed in petioles, stems, leaves and siliques.</text>
</comment>
<comment type="developmental stage">
    <text evidence="4">First observed after seed germination, mainly in the root cap, and in elongation and maturation zones, and, to a lower extent, in the apical meristem zone. Later present in roots, with higher levels in light conditions than in darkness. Weak levels in young flowers. Progressive accumulation in developing siliques, at both ends. In rosette leaves, mainly localized in vascular tissues and hydathodes.</text>
</comment>
<comment type="induction">
    <text evidence="4">Down-regulated in the dark.</text>
</comment>
<comment type="disruption phenotype">
    <text evidence="4 5">Abnormal organs elongation leading to long inflorescences, leaves and petioles, especially in the light.</text>
</comment>
<comment type="miscellaneous">
    <text evidence="4">The ben1-1D (bri1-5 enhanced 1-1dominant) activation-tagging mutant suppresses the bri1-5 weak mutant allele of the brassinosteroid receptor gene BRI1.</text>
</comment>
<comment type="similarity">
    <text evidence="7">Belongs to the NAD(P)-dependent epimerase/dehydratase family.</text>
</comment>
<gene>
    <name evidence="6" type="primary">BEN1</name>
    <name evidence="10" type="ordered locus">At2g45400</name>
    <name evidence="9" type="ORF">F4L23.9</name>
</gene>